<sequence>MRHIAEAAWKVNESIENIGARRLYTVLEHLMEDISYNSCNNKNELVINIDEEYVSKHLDELILNNDLNRFIL</sequence>
<reference key="1">
    <citation type="journal article" date="1995" name="Insect Mol. Biol.">
        <title>Genetics of the tryptophan biosynthetic pathway of the prokaryotic endosymbiont (Buchnera) of the aphid Schlechtendalia chinensis.</title>
        <authorList>
            <person name="Lai C.-Y."/>
            <person name="Baumann P."/>
            <person name="Moran N.A."/>
        </authorList>
    </citation>
    <scope>NUCLEOTIDE SEQUENCE [GENOMIC DNA]</scope>
</reference>
<dbReference type="EMBL" id="U09184">
    <property type="protein sequence ID" value="AAC31219.1"/>
    <property type="molecule type" value="Genomic_DNA"/>
</dbReference>
<dbReference type="SMR" id="O69227"/>
<dbReference type="STRING" id="118110.XW81_02690"/>
<dbReference type="GO" id="GO:0005737">
    <property type="term" value="C:cytoplasm"/>
    <property type="evidence" value="ECO:0007669"/>
    <property type="project" value="UniProtKB-SubCell"/>
</dbReference>
<dbReference type="GO" id="GO:0005524">
    <property type="term" value="F:ATP binding"/>
    <property type="evidence" value="ECO:0007669"/>
    <property type="project" value="UniProtKB-KW"/>
</dbReference>
<dbReference type="Gene3D" id="1.10.8.60">
    <property type="match status" value="1"/>
</dbReference>
<proteinExistence type="inferred from homology"/>
<evidence type="ECO:0000250" key="1"/>
<evidence type="ECO:0000305" key="2"/>
<keyword id="KW-0067">ATP-binding</keyword>
<keyword id="KW-0143">Chaperone</keyword>
<keyword id="KW-0963">Cytoplasm</keyword>
<keyword id="KW-0547">Nucleotide-binding</keyword>
<organism>
    <name type="scientific">Buchnera aphidicola subsp. Schlechtendalia chinensis</name>
    <dbReference type="NCBI Taxonomy" id="118110"/>
    <lineage>
        <taxon>Bacteria</taxon>
        <taxon>Pseudomonadati</taxon>
        <taxon>Pseudomonadota</taxon>
        <taxon>Gammaproteobacteria</taxon>
        <taxon>Enterobacterales</taxon>
        <taxon>Erwiniaceae</taxon>
        <taxon>Buchnera</taxon>
    </lineage>
</organism>
<name>HSLU_BUCSC</name>
<feature type="chain" id="PRO_0000160489" description="ATP-dependent protease ATPase subunit HslU">
    <location>
        <begin position="1" status="less than"/>
        <end position="72"/>
    </location>
</feature>
<feature type="binding site" evidence="1">
    <location>
        <position position="21"/>
    </location>
    <ligand>
        <name>ATP</name>
        <dbReference type="ChEBI" id="CHEBI:30616"/>
    </ligand>
</feature>
<feature type="non-terminal residue">
    <location>
        <position position="1"/>
    </location>
</feature>
<accession>O69227</accession>
<gene>
    <name type="primary">hslU</name>
</gene>
<comment type="function">
    <text evidence="1">ATPase subunit of a proteasome-like degradation complex; this subunit has chaperone activity. The binding of ATP and its subsequent hydrolysis by HslU are essential for unfolding of protein substrates subsequently hydrolyzed by HslV. HslU recognizes the N-terminal part of its protein substrates and unfolds these before they are guided to HslV for hydrolysis (By similarity).</text>
</comment>
<comment type="subunit">
    <text evidence="1">A double ring-shaped homohexamer of HslV is capped on each side by a ring-shaped HslU homohexamer. The assembly of the HslU/HslV complex is dependent on binding of ATP (By similarity).</text>
</comment>
<comment type="subcellular location">
    <subcellularLocation>
        <location evidence="1">Cytoplasm</location>
    </subcellularLocation>
</comment>
<comment type="similarity">
    <text evidence="2">Belongs to the ClpX chaperone family. HslU subfamily.</text>
</comment>
<protein>
    <recommendedName>
        <fullName>ATP-dependent protease ATPase subunit HslU</fullName>
    </recommendedName>
    <alternativeName>
        <fullName>Unfoldase HslU</fullName>
    </alternativeName>
</protein>